<feature type="chain" id="PRO_0000124156" description="Proteasome subunit alpha type-7-1">
    <location>
        <begin position="1"/>
        <end position="247"/>
    </location>
</feature>
<evidence type="ECO:0000250" key="1"/>
<evidence type="ECO:0000255" key="2">
    <source>
        <dbReference type="PROSITE-ProRule" id="PRU00808"/>
    </source>
</evidence>
<sequence>MSSRYDRAVTIFSPDGRLLQVEYAQEAVRKGSTAVGVRGGNCVVLGVEKKSVAKLQEDRTVRKICVLDHVVMAFAGLTDARILINRAQVECQSHRLNVEDPVTLEYITRYIAQLKQKYTQSNGRRPFGISCLIGGFDADGSPYLFQTEPSGIFYEYKANATGCSAKTVREFFEKQYREEEVSTERGAVKLAIRALLEVAQSGQHNLEVAIMENGKPLKMLDRKVILEYLDIIEKEKEEELEKKKQKK</sequence>
<proteinExistence type="inferred from homology"/>
<organism>
    <name type="scientific">Drosophila virilis</name>
    <name type="common">Fruit fly</name>
    <dbReference type="NCBI Taxonomy" id="7244"/>
    <lineage>
        <taxon>Eukaryota</taxon>
        <taxon>Metazoa</taxon>
        <taxon>Ecdysozoa</taxon>
        <taxon>Arthropoda</taxon>
        <taxon>Hexapoda</taxon>
        <taxon>Insecta</taxon>
        <taxon>Pterygota</taxon>
        <taxon>Neoptera</taxon>
        <taxon>Endopterygota</taxon>
        <taxon>Diptera</taxon>
        <taxon>Brachycera</taxon>
        <taxon>Muscomorpha</taxon>
        <taxon>Ephydroidea</taxon>
        <taxon>Drosophilidae</taxon>
        <taxon>Drosophila</taxon>
    </lineage>
</organism>
<protein>
    <recommendedName>
        <fullName>Proteasome subunit alpha type-7-1</fullName>
    </recommendedName>
    <alternativeName>
        <fullName>Proteasome 28 kDa subunit 1</fullName>
    </alternativeName>
</protein>
<accession>O16811</accession>
<reference key="1">
    <citation type="journal article" date="1998" name="Gene">
        <title>Evolutionary conservation of a testes-specific proteasome subunit gene in Drosophila.</title>
        <authorList>
            <person name="Belote J.M."/>
            <person name="Miller M."/>
            <person name="Smyth K.A."/>
        </authorList>
    </citation>
    <scope>NUCLEOTIDE SEQUENCE [GENOMIC DNA]</scope>
</reference>
<comment type="function">
    <text>The proteasome is a multicatalytic proteinase complex which is characterized by its ability to cleave peptides with Arg, Phe, Tyr, Leu, and Glu adjacent to the leaving group at neutral or slightly basic pH. The proteasome has an ATP-dependent proteolytic activity.</text>
</comment>
<comment type="subunit">
    <text evidence="1">The 26S proteasome consists of a 20S proteasome core and two 19S regulatory subunits. The 20S proteasome core is composed of 28 subunits that are arranged in four stacked rings, resulting in a barrel-shaped structure. The two end rings are each formed by seven alpha subunits, and the two central rings are each formed by seven beta subunits. The catalytic chamber with the active sites is on the inside of the barrel (By similarity).</text>
</comment>
<comment type="subcellular location">
    <subcellularLocation>
        <location evidence="1">Cytoplasm</location>
    </subcellularLocation>
    <subcellularLocation>
        <location evidence="1">Nucleus</location>
    </subcellularLocation>
</comment>
<comment type="similarity">
    <text evidence="2">Belongs to the peptidase T1A family.</text>
</comment>
<name>PSA71_DROVI</name>
<gene>
    <name type="primary">Pros28.1</name>
</gene>
<dbReference type="EMBL" id="AF017649">
    <property type="protein sequence ID" value="AAC34196.1"/>
    <property type="molecule type" value="Genomic_DNA"/>
</dbReference>
<dbReference type="SMR" id="O16811"/>
<dbReference type="MEROPS" id="T01.973"/>
<dbReference type="eggNOG" id="KOG0183">
    <property type="taxonomic scope" value="Eukaryota"/>
</dbReference>
<dbReference type="OrthoDB" id="3145928at2759"/>
<dbReference type="GO" id="GO:0005737">
    <property type="term" value="C:cytoplasm"/>
    <property type="evidence" value="ECO:0007669"/>
    <property type="project" value="UniProtKB-SubCell"/>
</dbReference>
<dbReference type="GO" id="GO:0005634">
    <property type="term" value="C:nucleus"/>
    <property type="evidence" value="ECO:0007669"/>
    <property type="project" value="UniProtKB-SubCell"/>
</dbReference>
<dbReference type="GO" id="GO:0019773">
    <property type="term" value="C:proteasome core complex, alpha-subunit complex"/>
    <property type="evidence" value="ECO:0000250"/>
    <property type="project" value="UniProtKB"/>
</dbReference>
<dbReference type="GO" id="GO:0006511">
    <property type="term" value="P:ubiquitin-dependent protein catabolic process"/>
    <property type="evidence" value="ECO:0007669"/>
    <property type="project" value="InterPro"/>
</dbReference>
<dbReference type="CDD" id="cd03755">
    <property type="entry name" value="proteasome_alpha_type_7"/>
    <property type="match status" value="1"/>
</dbReference>
<dbReference type="FunFam" id="3.60.20.10:FF:000059">
    <property type="entry name" value="Proteasome subunit alpha type"/>
    <property type="match status" value="1"/>
</dbReference>
<dbReference type="Gene3D" id="3.60.20.10">
    <property type="entry name" value="Glutamine Phosphoribosylpyrophosphate, subunit 1, domain 1"/>
    <property type="match status" value="1"/>
</dbReference>
<dbReference type="InterPro" id="IPR029055">
    <property type="entry name" value="Ntn_hydrolases_N"/>
</dbReference>
<dbReference type="InterPro" id="IPR050115">
    <property type="entry name" value="Proteasome_alpha"/>
</dbReference>
<dbReference type="InterPro" id="IPR023332">
    <property type="entry name" value="Proteasome_alpha-type"/>
</dbReference>
<dbReference type="InterPro" id="IPR000426">
    <property type="entry name" value="Proteasome_asu_N"/>
</dbReference>
<dbReference type="InterPro" id="IPR001353">
    <property type="entry name" value="Proteasome_sua/b"/>
</dbReference>
<dbReference type="NCBIfam" id="NF003075">
    <property type="entry name" value="PRK03996.1"/>
    <property type="match status" value="1"/>
</dbReference>
<dbReference type="PANTHER" id="PTHR11599">
    <property type="entry name" value="PROTEASOME SUBUNIT ALPHA/BETA"/>
    <property type="match status" value="1"/>
</dbReference>
<dbReference type="Pfam" id="PF00227">
    <property type="entry name" value="Proteasome"/>
    <property type="match status" value="1"/>
</dbReference>
<dbReference type="Pfam" id="PF10584">
    <property type="entry name" value="Proteasome_A_N"/>
    <property type="match status" value="1"/>
</dbReference>
<dbReference type="SMART" id="SM00948">
    <property type="entry name" value="Proteasome_A_N"/>
    <property type="match status" value="1"/>
</dbReference>
<dbReference type="SUPFAM" id="SSF56235">
    <property type="entry name" value="N-terminal nucleophile aminohydrolases (Ntn hydrolases)"/>
    <property type="match status" value="1"/>
</dbReference>
<dbReference type="PROSITE" id="PS00388">
    <property type="entry name" value="PROTEASOME_ALPHA_1"/>
    <property type="match status" value="1"/>
</dbReference>
<dbReference type="PROSITE" id="PS51475">
    <property type="entry name" value="PROTEASOME_ALPHA_2"/>
    <property type="match status" value="1"/>
</dbReference>
<keyword id="KW-0963">Cytoplasm</keyword>
<keyword id="KW-0539">Nucleus</keyword>
<keyword id="KW-0647">Proteasome</keyword>